<gene>
    <name type="ordered locus">BMEA_A1089</name>
</gene>
<sequence length="199" mass="21354">MVKMLVLYYSAYGYMEQMAKAAAEGAREGGAEVTLKRVPELVPEEVAKASHYKIDQEAPIATPGELADYDAIIIGTATRYGMMASQMKNFLDQTGGLWAKGALINKVGSVMVSTATQHGGAELALISTQWQMQHHGMIIVPLSYACREQMGNDVVRGGAPYGMTTTADGDGSRQPSAQELDGARFQGRRVAEITAKLHG</sequence>
<accession>C0RJ23</accession>
<evidence type="ECO:0000255" key="1">
    <source>
        <dbReference type="HAMAP-Rule" id="MF_01017"/>
    </source>
</evidence>
<evidence type="ECO:0000256" key="2">
    <source>
        <dbReference type="SAM" id="MobiDB-lite"/>
    </source>
</evidence>
<dbReference type="EC" id="1.6.5.2" evidence="1"/>
<dbReference type="EMBL" id="CP001488">
    <property type="protein sequence ID" value="ACO00831.1"/>
    <property type="molecule type" value="Genomic_DNA"/>
</dbReference>
<dbReference type="SMR" id="C0RJ23"/>
<dbReference type="KEGG" id="bmi:BMEA_A1089"/>
<dbReference type="HOGENOM" id="CLU_051402_0_2_5"/>
<dbReference type="Proteomes" id="UP000001748">
    <property type="component" value="Chromosome I"/>
</dbReference>
<dbReference type="GO" id="GO:0016020">
    <property type="term" value="C:membrane"/>
    <property type="evidence" value="ECO:0007669"/>
    <property type="project" value="TreeGrafter"/>
</dbReference>
<dbReference type="GO" id="GO:0050660">
    <property type="term" value="F:flavin adenine dinucleotide binding"/>
    <property type="evidence" value="ECO:0007669"/>
    <property type="project" value="UniProtKB-UniRule"/>
</dbReference>
<dbReference type="GO" id="GO:0010181">
    <property type="term" value="F:FMN binding"/>
    <property type="evidence" value="ECO:0007669"/>
    <property type="project" value="InterPro"/>
</dbReference>
<dbReference type="GO" id="GO:0051287">
    <property type="term" value="F:NAD binding"/>
    <property type="evidence" value="ECO:0007669"/>
    <property type="project" value="UniProtKB-UniRule"/>
</dbReference>
<dbReference type="GO" id="GO:0050136">
    <property type="term" value="F:NADH:ubiquinone reductase (non-electrogenic) activity"/>
    <property type="evidence" value="ECO:0007669"/>
    <property type="project" value="RHEA"/>
</dbReference>
<dbReference type="GO" id="GO:0050661">
    <property type="term" value="F:NADP binding"/>
    <property type="evidence" value="ECO:0007669"/>
    <property type="project" value="UniProtKB-UniRule"/>
</dbReference>
<dbReference type="GO" id="GO:0008753">
    <property type="term" value="F:NADPH dehydrogenase (quinone) activity"/>
    <property type="evidence" value="ECO:0007669"/>
    <property type="project" value="RHEA"/>
</dbReference>
<dbReference type="FunFam" id="3.40.50.360:FF:000001">
    <property type="entry name" value="NAD(P)H dehydrogenase (Quinone) FQR1-like"/>
    <property type="match status" value="1"/>
</dbReference>
<dbReference type="Gene3D" id="3.40.50.360">
    <property type="match status" value="1"/>
</dbReference>
<dbReference type="HAMAP" id="MF_01017">
    <property type="entry name" value="NQOR"/>
    <property type="match status" value="1"/>
</dbReference>
<dbReference type="InterPro" id="IPR008254">
    <property type="entry name" value="Flavodoxin/NO_synth"/>
</dbReference>
<dbReference type="InterPro" id="IPR029039">
    <property type="entry name" value="Flavoprotein-like_sf"/>
</dbReference>
<dbReference type="InterPro" id="IPR010089">
    <property type="entry name" value="Flavoprotein_WrbA-like"/>
</dbReference>
<dbReference type="InterPro" id="IPR005025">
    <property type="entry name" value="FMN_Rdtase-like_dom"/>
</dbReference>
<dbReference type="InterPro" id="IPR037513">
    <property type="entry name" value="NQO"/>
</dbReference>
<dbReference type="NCBIfam" id="TIGR01755">
    <property type="entry name" value="flav_wrbA"/>
    <property type="match status" value="1"/>
</dbReference>
<dbReference type="NCBIfam" id="NF002999">
    <property type="entry name" value="PRK03767.1"/>
    <property type="match status" value="1"/>
</dbReference>
<dbReference type="PANTHER" id="PTHR30546">
    <property type="entry name" value="FLAVODOXIN-RELATED PROTEIN WRBA-RELATED"/>
    <property type="match status" value="1"/>
</dbReference>
<dbReference type="PANTHER" id="PTHR30546:SF23">
    <property type="entry name" value="FLAVOPROTEIN-LIKE PROTEIN YCP4-RELATED"/>
    <property type="match status" value="1"/>
</dbReference>
<dbReference type="Pfam" id="PF03358">
    <property type="entry name" value="FMN_red"/>
    <property type="match status" value="1"/>
</dbReference>
<dbReference type="SUPFAM" id="SSF52218">
    <property type="entry name" value="Flavoproteins"/>
    <property type="match status" value="1"/>
</dbReference>
<dbReference type="PROSITE" id="PS50902">
    <property type="entry name" value="FLAVODOXIN_LIKE"/>
    <property type="match status" value="1"/>
</dbReference>
<keyword id="KW-0285">Flavoprotein</keyword>
<keyword id="KW-0288">FMN</keyword>
<keyword id="KW-0520">NAD</keyword>
<keyword id="KW-0521">NADP</keyword>
<keyword id="KW-0547">Nucleotide-binding</keyword>
<keyword id="KW-0560">Oxidoreductase</keyword>
<reference key="1">
    <citation type="submission" date="2009-03" db="EMBL/GenBank/DDBJ databases">
        <title>Brucella melitensis ATCC 23457 whole genome shotgun sequencing project.</title>
        <authorList>
            <person name="Setubal J.C."/>
            <person name="Boyle S."/>
            <person name="Crasta O.R."/>
            <person name="Gillespie J.J."/>
            <person name="Kenyon R.W."/>
            <person name="Lu J."/>
            <person name="Mane S."/>
            <person name="Nagrani S."/>
            <person name="Shallom J.M."/>
            <person name="Shallom S."/>
            <person name="Shukla M."/>
            <person name="Snyder E.E."/>
            <person name="Sobral B.W."/>
            <person name="Wattam A.R."/>
            <person name="Will R."/>
            <person name="Williams K."/>
            <person name="Yoo H."/>
            <person name="Munk C."/>
            <person name="Tapia R."/>
            <person name="Han C."/>
            <person name="Detter J.C."/>
            <person name="Bruce D."/>
            <person name="Brettin T.S."/>
        </authorList>
    </citation>
    <scope>NUCLEOTIDE SEQUENCE [LARGE SCALE GENOMIC DNA]</scope>
    <source>
        <strain>ATCC 23457</strain>
    </source>
</reference>
<organism>
    <name type="scientific">Brucella melitensis biotype 2 (strain ATCC 23457)</name>
    <dbReference type="NCBI Taxonomy" id="546272"/>
    <lineage>
        <taxon>Bacteria</taxon>
        <taxon>Pseudomonadati</taxon>
        <taxon>Pseudomonadota</taxon>
        <taxon>Alphaproteobacteria</taxon>
        <taxon>Hyphomicrobiales</taxon>
        <taxon>Brucellaceae</taxon>
        <taxon>Brucella/Ochrobactrum group</taxon>
        <taxon>Brucella</taxon>
    </lineage>
</organism>
<protein>
    <recommendedName>
        <fullName evidence="1">NAD(P)H dehydrogenase (quinone)</fullName>
        <ecNumber evidence="1">1.6.5.2</ecNumber>
    </recommendedName>
    <alternativeName>
        <fullName>Flavoprotein WrbA</fullName>
    </alternativeName>
    <alternativeName>
        <fullName evidence="1">NAD(P)H:quinone oxidoreductase</fullName>
        <shortName evidence="1">NQO</shortName>
    </alternativeName>
</protein>
<feature type="chain" id="PRO_1000149005" description="NAD(P)H dehydrogenase (quinone)">
    <location>
        <begin position="1"/>
        <end position="199"/>
    </location>
</feature>
<feature type="domain" description="Flavodoxin-like" evidence="1">
    <location>
        <begin position="4"/>
        <end position="190"/>
    </location>
</feature>
<feature type="region of interest" description="Disordered" evidence="2">
    <location>
        <begin position="157"/>
        <end position="181"/>
    </location>
</feature>
<feature type="compositionally biased region" description="Polar residues" evidence="2">
    <location>
        <begin position="163"/>
        <end position="177"/>
    </location>
</feature>
<feature type="binding site" evidence="1">
    <location>
        <begin position="10"/>
        <end position="15"/>
    </location>
    <ligand>
        <name>FMN</name>
        <dbReference type="ChEBI" id="CHEBI:58210"/>
    </ligand>
</feature>
<feature type="binding site" evidence="1">
    <location>
        <position position="12"/>
    </location>
    <ligand>
        <name>NAD(+)</name>
        <dbReference type="ChEBI" id="CHEBI:57540"/>
    </ligand>
</feature>
<feature type="binding site" evidence="1">
    <location>
        <begin position="78"/>
        <end position="80"/>
    </location>
    <ligand>
        <name>FMN</name>
        <dbReference type="ChEBI" id="CHEBI:58210"/>
    </ligand>
</feature>
<feature type="binding site" evidence="1">
    <location>
        <position position="98"/>
    </location>
    <ligand>
        <name>substrate</name>
    </ligand>
</feature>
<feature type="binding site" evidence="1">
    <location>
        <begin position="113"/>
        <end position="119"/>
    </location>
    <ligand>
        <name>FMN</name>
        <dbReference type="ChEBI" id="CHEBI:58210"/>
    </ligand>
</feature>
<feature type="binding site" evidence="1">
    <location>
        <position position="134"/>
    </location>
    <ligand>
        <name>FMN</name>
        <dbReference type="ChEBI" id="CHEBI:58210"/>
    </ligand>
</feature>
<comment type="catalytic activity">
    <reaction evidence="1">
        <text>a quinone + NADH + H(+) = a quinol + NAD(+)</text>
        <dbReference type="Rhea" id="RHEA:46160"/>
        <dbReference type="ChEBI" id="CHEBI:15378"/>
        <dbReference type="ChEBI" id="CHEBI:24646"/>
        <dbReference type="ChEBI" id="CHEBI:57540"/>
        <dbReference type="ChEBI" id="CHEBI:57945"/>
        <dbReference type="ChEBI" id="CHEBI:132124"/>
        <dbReference type="EC" id="1.6.5.2"/>
    </reaction>
</comment>
<comment type="catalytic activity">
    <reaction evidence="1">
        <text>a quinone + NADPH + H(+) = a quinol + NADP(+)</text>
        <dbReference type="Rhea" id="RHEA:46164"/>
        <dbReference type="ChEBI" id="CHEBI:15378"/>
        <dbReference type="ChEBI" id="CHEBI:24646"/>
        <dbReference type="ChEBI" id="CHEBI:57783"/>
        <dbReference type="ChEBI" id="CHEBI:58349"/>
        <dbReference type="ChEBI" id="CHEBI:132124"/>
        <dbReference type="EC" id="1.6.5.2"/>
    </reaction>
</comment>
<comment type="cofactor">
    <cofactor evidence="1">
        <name>FMN</name>
        <dbReference type="ChEBI" id="CHEBI:58210"/>
    </cofactor>
    <text evidence="1">Binds 1 FMN per monomer.</text>
</comment>
<comment type="similarity">
    <text evidence="1">Belongs to the WrbA family.</text>
</comment>
<proteinExistence type="inferred from homology"/>
<name>NQOR_BRUMB</name>